<sequence>MQLLNSCCGKGFDGKKKEKEEPSWRVFSLKELHAATNSFNYDNKLGEGRFGSVYWGQLWDGSQIAVKRLKEWSNREEIDFAVEVEILARIRHKNLLSVRGYCAEGQERLLVYEYMQNLSLVSHLHGQHSAECLLDWTKRMKIAISSAQAIAYLHDHATPHIVHGDVRASNVLLDSEFEARVTDFGYGKLMPDDDTGDGATKAKSNNGYISPECDASGKESETSDVYSFGILLMVLVSGKRPLERLNPTTTRCITEWVLPLVYERNFGEIVDKRLSEEHVAEKLKKVVLVGLMCAQTDPDKRPTMSEVVEMLVNESKEKISELEANPLFKNPYSSNENNREHVAEESSDVILEDKDHQQQQE</sequence>
<reference key="1">
    <citation type="journal article" date="2000" name="DNA Res.">
        <title>Structural analysis of Arabidopsis thaliana chromosome 3. I. Sequence features of the regions of 4,504,864 bp covered by sixty P1 and TAC clones.</title>
        <authorList>
            <person name="Sato S."/>
            <person name="Nakamura Y."/>
            <person name="Kaneko T."/>
            <person name="Katoh T."/>
            <person name="Asamizu E."/>
            <person name="Tabata S."/>
        </authorList>
    </citation>
    <scope>NUCLEOTIDE SEQUENCE [LARGE SCALE GENOMIC DNA]</scope>
    <source>
        <strain>cv. Columbia</strain>
    </source>
</reference>
<reference key="2">
    <citation type="journal article" date="2017" name="Plant J.">
        <title>Araport11: a complete reannotation of the Arabidopsis thaliana reference genome.</title>
        <authorList>
            <person name="Cheng C.Y."/>
            <person name="Krishnakumar V."/>
            <person name="Chan A.P."/>
            <person name="Thibaud-Nissen F."/>
            <person name="Schobel S."/>
            <person name="Town C.D."/>
        </authorList>
    </citation>
    <scope>GENOME REANNOTATION</scope>
    <source>
        <strain>cv. Columbia</strain>
    </source>
</reference>
<reference key="3">
    <citation type="submission" date="2002-03" db="EMBL/GenBank/DDBJ databases">
        <title>Full-length cDNA from Arabidopsis thaliana.</title>
        <authorList>
            <person name="Brover V.V."/>
            <person name="Troukhan M.E."/>
            <person name="Alexandrov N.A."/>
            <person name="Lu Y.-P."/>
            <person name="Flavell R.B."/>
            <person name="Feldmann K.A."/>
        </authorList>
    </citation>
    <scope>NUCLEOTIDE SEQUENCE [LARGE SCALE MRNA]</scope>
</reference>
<protein>
    <recommendedName>
        <fullName>PTI1-like tyrosine-protein kinase At3g15890</fullName>
        <ecNumber>2.7.10.2</ecNumber>
    </recommendedName>
</protein>
<organism>
    <name type="scientific">Arabidopsis thaliana</name>
    <name type="common">Mouse-ear cress</name>
    <dbReference type="NCBI Taxonomy" id="3702"/>
    <lineage>
        <taxon>Eukaryota</taxon>
        <taxon>Viridiplantae</taxon>
        <taxon>Streptophyta</taxon>
        <taxon>Embryophyta</taxon>
        <taxon>Tracheophyta</taxon>
        <taxon>Spermatophyta</taxon>
        <taxon>Magnoliopsida</taxon>
        <taxon>eudicotyledons</taxon>
        <taxon>Gunneridae</taxon>
        <taxon>Pentapetalae</taxon>
        <taxon>rosids</taxon>
        <taxon>malvids</taxon>
        <taxon>Brassicales</taxon>
        <taxon>Brassicaceae</taxon>
        <taxon>Camelineae</taxon>
        <taxon>Arabidopsis</taxon>
    </lineage>
</organism>
<accession>Q9LSC2</accession>
<accession>Q8L9L7</accession>
<feature type="chain" id="PRO_0000403326" description="PTI1-like tyrosine-protein kinase At3g15890">
    <location>
        <begin position="1"/>
        <end position="361"/>
    </location>
</feature>
<feature type="domain" description="Protein kinase" evidence="1">
    <location>
        <begin position="39"/>
        <end position="328"/>
    </location>
</feature>
<feature type="region of interest" description="Disordered" evidence="3">
    <location>
        <begin position="195"/>
        <end position="219"/>
    </location>
</feature>
<feature type="region of interest" description="Disordered" evidence="3">
    <location>
        <begin position="323"/>
        <end position="361"/>
    </location>
</feature>
<feature type="compositionally biased region" description="Basic and acidic residues" evidence="3">
    <location>
        <begin position="351"/>
        <end position="361"/>
    </location>
</feature>
<feature type="active site" description="Proton acceptor" evidence="1 2">
    <location>
        <position position="165"/>
    </location>
</feature>
<feature type="binding site" evidence="1">
    <location>
        <begin position="45"/>
        <end position="53"/>
    </location>
    <ligand>
        <name>ATP</name>
        <dbReference type="ChEBI" id="CHEBI:30616"/>
    </ligand>
</feature>
<feature type="binding site" evidence="1">
    <location>
        <position position="67"/>
    </location>
    <ligand>
        <name>ATP</name>
        <dbReference type="ChEBI" id="CHEBI:30616"/>
    </ligand>
</feature>
<feature type="sequence conflict" description="In Ref. 3; AAM65900." evidence="4" ref="3">
    <original>L</original>
    <variation>F</variation>
    <location>
        <position position="4"/>
    </location>
</feature>
<feature type="sequence conflict" description="In Ref. 3; AAM65900." evidence="4" ref="3">
    <original>I</original>
    <variation>M</variation>
    <location>
        <position position="144"/>
    </location>
</feature>
<gene>
    <name type="ordered locus">At3g15890</name>
    <name type="ORF">MVC8.1</name>
</gene>
<keyword id="KW-0067">ATP-binding</keyword>
<keyword id="KW-0418">Kinase</keyword>
<keyword id="KW-0547">Nucleotide-binding</keyword>
<keyword id="KW-1185">Reference proteome</keyword>
<keyword id="KW-0808">Transferase</keyword>
<keyword id="KW-0829">Tyrosine-protein kinase</keyword>
<comment type="catalytic activity">
    <reaction evidence="2">
        <text>L-tyrosyl-[protein] + ATP = O-phospho-L-tyrosyl-[protein] + ADP + H(+)</text>
        <dbReference type="Rhea" id="RHEA:10596"/>
        <dbReference type="Rhea" id="RHEA-COMP:10136"/>
        <dbReference type="Rhea" id="RHEA-COMP:20101"/>
        <dbReference type="ChEBI" id="CHEBI:15378"/>
        <dbReference type="ChEBI" id="CHEBI:30616"/>
        <dbReference type="ChEBI" id="CHEBI:46858"/>
        <dbReference type="ChEBI" id="CHEBI:61978"/>
        <dbReference type="ChEBI" id="CHEBI:456216"/>
        <dbReference type="EC" id="2.7.10.2"/>
    </reaction>
</comment>
<comment type="similarity">
    <text evidence="1">Belongs to the protein kinase superfamily. Tyr protein kinase family.</text>
</comment>
<comment type="online information" name="Arabidopsis protein tyrosine kinases">
    <link uri="http://www.bio.unipd.it/molbinfo/PTKtable.html"/>
</comment>
<name>Y3589_ARATH</name>
<evidence type="ECO:0000255" key="1">
    <source>
        <dbReference type="PROSITE-ProRule" id="PRU00159"/>
    </source>
</evidence>
<evidence type="ECO:0000255" key="2">
    <source>
        <dbReference type="PROSITE-ProRule" id="PRU10028"/>
    </source>
</evidence>
<evidence type="ECO:0000256" key="3">
    <source>
        <dbReference type="SAM" id="MobiDB-lite"/>
    </source>
</evidence>
<evidence type="ECO:0000305" key="4"/>
<dbReference type="EC" id="2.7.10.2"/>
<dbReference type="EMBL" id="AB026653">
    <property type="protein sequence ID" value="BAB02873.1"/>
    <property type="molecule type" value="Genomic_DNA"/>
</dbReference>
<dbReference type="EMBL" id="CP002686">
    <property type="protein sequence ID" value="AEE75743.1"/>
    <property type="molecule type" value="Genomic_DNA"/>
</dbReference>
<dbReference type="EMBL" id="AY088361">
    <property type="protein sequence ID" value="AAM65900.1"/>
    <property type="molecule type" value="mRNA"/>
</dbReference>
<dbReference type="RefSeq" id="NP_566530.1">
    <property type="nucleotide sequence ID" value="NM_112459.1"/>
</dbReference>
<dbReference type="SMR" id="Q9LSC2"/>
<dbReference type="FunCoup" id="Q9LSC2">
    <property type="interactions" value="817"/>
</dbReference>
<dbReference type="STRING" id="3702.Q9LSC2"/>
<dbReference type="iPTMnet" id="Q9LSC2"/>
<dbReference type="SwissPalm" id="Q9LSC2"/>
<dbReference type="PaxDb" id="3702-AT3G15890.1"/>
<dbReference type="ProteomicsDB" id="242865"/>
<dbReference type="EnsemblPlants" id="AT3G15890.1">
    <property type="protein sequence ID" value="AT3G15890.1"/>
    <property type="gene ID" value="AT3G15890"/>
</dbReference>
<dbReference type="GeneID" id="820832"/>
<dbReference type="Gramene" id="AT3G15890.1">
    <property type="protein sequence ID" value="AT3G15890.1"/>
    <property type="gene ID" value="AT3G15890"/>
</dbReference>
<dbReference type="KEGG" id="ath:AT3G15890"/>
<dbReference type="Araport" id="AT3G15890"/>
<dbReference type="TAIR" id="AT3G15890"/>
<dbReference type="eggNOG" id="KOG1187">
    <property type="taxonomic scope" value="Eukaryota"/>
</dbReference>
<dbReference type="HOGENOM" id="CLU_000288_21_4_1"/>
<dbReference type="InParanoid" id="Q9LSC2"/>
<dbReference type="OMA" id="YLHDHAT"/>
<dbReference type="PhylomeDB" id="Q9LSC2"/>
<dbReference type="PRO" id="PR:Q9LSC2"/>
<dbReference type="Proteomes" id="UP000006548">
    <property type="component" value="Chromosome 3"/>
</dbReference>
<dbReference type="ExpressionAtlas" id="Q9LSC2">
    <property type="expression patterns" value="baseline and differential"/>
</dbReference>
<dbReference type="GO" id="GO:0005886">
    <property type="term" value="C:plasma membrane"/>
    <property type="evidence" value="ECO:0007005"/>
    <property type="project" value="TAIR"/>
</dbReference>
<dbReference type="GO" id="GO:0005524">
    <property type="term" value="F:ATP binding"/>
    <property type="evidence" value="ECO:0007669"/>
    <property type="project" value="UniProtKB-KW"/>
</dbReference>
<dbReference type="GO" id="GO:0004715">
    <property type="term" value="F:non-membrane spanning protein tyrosine kinase activity"/>
    <property type="evidence" value="ECO:0007669"/>
    <property type="project" value="UniProtKB-EC"/>
</dbReference>
<dbReference type="CDD" id="cd14066">
    <property type="entry name" value="STKc_IRAK"/>
    <property type="match status" value="1"/>
</dbReference>
<dbReference type="FunFam" id="1.10.510.10:FF:000317">
    <property type="entry name" value="PTI1-like tyrosine-protein kinase At3g15890"/>
    <property type="match status" value="1"/>
</dbReference>
<dbReference type="FunFam" id="3.30.200.20:FF:000305">
    <property type="entry name" value="PTI1-like tyrosine-protein kinase At3g15890"/>
    <property type="match status" value="1"/>
</dbReference>
<dbReference type="Gene3D" id="3.30.200.20">
    <property type="entry name" value="Phosphorylase Kinase, domain 1"/>
    <property type="match status" value="1"/>
</dbReference>
<dbReference type="Gene3D" id="1.10.510.10">
    <property type="entry name" value="Transferase(Phosphotransferase) domain 1"/>
    <property type="match status" value="1"/>
</dbReference>
<dbReference type="InterPro" id="IPR052059">
    <property type="entry name" value="CR_Ser/Thr_kinase"/>
</dbReference>
<dbReference type="InterPro" id="IPR011009">
    <property type="entry name" value="Kinase-like_dom_sf"/>
</dbReference>
<dbReference type="InterPro" id="IPR000719">
    <property type="entry name" value="Prot_kinase_dom"/>
</dbReference>
<dbReference type="InterPro" id="IPR017441">
    <property type="entry name" value="Protein_kinase_ATP_BS"/>
</dbReference>
<dbReference type="InterPro" id="IPR001245">
    <property type="entry name" value="Ser-Thr/Tyr_kinase_cat_dom"/>
</dbReference>
<dbReference type="InterPro" id="IPR008266">
    <property type="entry name" value="Tyr_kinase_AS"/>
</dbReference>
<dbReference type="PANTHER" id="PTHR47973">
    <property type="entry name" value="CYSTEINE-RICH RECEPTOR-LIKE PROTEIN KINASE 3"/>
    <property type="match status" value="1"/>
</dbReference>
<dbReference type="Pfam" id="PF07714">
    <property type="entry name" value="PK_Tyr_Ser-Thr"/>
    <property type="match status" value="1"/>
</dbReference>
<dbReference type="SUPFAM" id="SSF56112">
    <property type="entry name" value="Protein kinase-like (PK-like)"/>
    <property type="match status" value="1"/>
</dbReference>
<dbReference type="PROSITE" id="PS00107">
    <property type="entry name" value="PROTEIN_KINASE_ATP"/>
    <property type="match status" value="1"/>
</dbReference>
<dbReference type="PROSITE" id="PS50011">
    <property type="entry name" value="PROTEIN_KINASE_DOM"/>
    <property type="match status" value="1"/>
</dbReference>
<dbReference type="PROSITE" id="PS00109">
    <property type="entry name" value="PROTEIN_KINASE_TYR"/>
    <property type="match status" value="1"/>
</dbReference>
<proteinExistence type="evidence at transcript level"/>